<dbReference type="EC" id="7.3.2.5" evidence="1"/>
<dbReference type="EMBL" id="CP000247">
    <property type="protein sequence ID" value="ABG68796.1"/>
    <property type="molecule type" value="Genomic_DNA"/>
</dbReference>
<dbReference type="RefSeq" id="WP_000891671.1">
    <property type="nucleotide sequence ID" value="NC_008253.1"/>
</dbReference>
<dbReference type="SMR" id="Q0TJT5"/>
<dbReference type="KEGG" id="ecp:ECP_0777"/>
<dbReference type="HOGENOM" id="CLU_000604_1_1_6"/>
<dbReference type="Proteomes" id="UP000009182">
    <property type="component" value="Chromosome"/>
</dbReference>
<dbReference type="GO" id="GO:0005886">
    <property type="term" value="C:plasma membrane"/>
    <property type="evidence" value="ECO:0007669"/>
    <property type="project" value="UniProtKB-SubCell"/>
</dbReference>
<dbReference type="GO" id="GO:0015412">
    <property type="term" value="F:ABC-type molybdate transporter activity"/>
    <property type="evidence" value="ECO:0007669"/>
    <property type="project" value="UniProtKB-EC"/>
</dbReference>
<dbReference type="GO" id="GO:0005524">
    <property type="term" value="F:ATP binding"/>
    <property type="evidence" value="ECO:0007669"/>
    <property type="project" value="UniProtKB-KW"/>
</dbReference>
<dbReference type="GO" id="GO:0016887">
    <property type="term" value="F:ATP hydrolysis activity"/>
    <property type="evidence" value="ECO:0007669"/>
    <property type="project" value="InterPro"/>
</dbReference>
<dbReference type="FunFam" id="2.40.50.100:FF:000037">
    <property type="entry name" value="Molybdenum import ATP-binding protein ModC"/>
    <property type="match status" value="1"/>
</dbReference>
<dbReference type="FunFam" id="3.40.50.300:FF:000634">
    <property type="entry name" value="Molybdenum import ATP-binding protein ModC"/>
    <property type="match status" value="1"/>
</dbReference>
<dbReference type="Gene3D" id="2.40.50.100">
    <property type="match status" value="1"/>
</dbReference>
<dbReference type="Gene3D" id="3.40.50.300">
    <property type="entry name" value="P-loop containing nucleotide triphosphate hydrolases"/>
    <property type="match status" value="1"/>
</dbReference>
<dbReference type="InterPro" id="IPR003593">
    <property type="entry name" value="AAA+_ATPase"/>
</dbReference>
<dbReference type="InterPro" id="IPR003439">
    <property type="entry name" value="ABC_transporter-like_ATP-bd"/>
</dbReference>
<dbReference type="InterPro" id="IPR017871">
    <property type="entry name" value="ABC_transporter-like_CS"/>
</dbReference>
<dbReference type="InterPro" id="IPR008995">
    <property type="entry name" value="Mo/tungstate-bd_C_term_dom"/>
</dbReference>
<dbReference type="InterPro" id="IPR011868">
    <property type="entry name" value="ModC_ABC_ATP-bd"/>
</dbReference>
<dbReference type="InterPro" id="IPR050334">
    <property type="entry name" value="Molybdenum_import_ModC"/>
</dbReference>
<dbReference type="InterPro" id="IPR004606">
    <property type="entry name" value="Mop_domain"/>
</dbReference>
<dbReference type="InterPro" id="IPR027417">
    <property type="entry name" value="P-loop_NTPase"/>
</dbReference>
<dbReference type="InterPro" id="IPR005116">
    <property type="entry name" value="Transp-assoc_OB_typ1"/>
</dbReference>
<dbReference type="NCBIfam" id="TIGR02142">
    <property type="entry name" value="modC_ABC"/>
    <property type="match status" value="1"/>
</dbReference>
<dbReference type="NCBIfam" id="TIGR00638">
    <property type="entry name" value="Mop"/>
    <property type="match status" value="1"/>
</dbReference>
<dbReference type="NCBIfam" id="NF008355">
    <property type="entry name" value="PRK11144.1"/>
    <property type="match status" value="1"/>
</dbReference>
<dbReference type="PANTHER" id="PTHR43514">
    <property type="entry name" value="ABC TRANSPORTER I FAMILY MEMBER 10"/>
    <property type="match status" value="1"/>
</dbReference>
<dbReference type="PANTHER" id="PTHR43514:SF4">
    <property type="entry name" value="ABC TRANSPORTER I FAMILY MEMBER 10"/>
    <property type="match status" value="1"/>
</dbReference>
<dbReference type="Pfam" id="PF00005">
    <property type="entry name" value="ABC_tran"/>
    <property type="match status" value="1"/>
</dbReference>
<dbReference type="Pfam" id="PF03459">
    <property type="entry name" value="TOBE"/>
    <property type="match status" value="1"/>
</dbReference>
<dbReference type="SMART" id="SM00382">
    <property type="entry name" value="AAA"/>
    <property type="match status" value="1"/>
</dbReference>
<dbReference type="SUPFAM" id="SSF50331">
    <property type="entry name" value="MOP-like"/>
    <property type="match status" value="1"/>
</dbReference>
<dbReference type="SUPFAM" id="SSF52540">
    <property type="entry name" value="P-loop containing nucleoside triphosphate hydrolases"/>
    <property type="match status" value="1"/>
</dbReference>
<dbReference type="PROSITE" id="PS00211">
    <property type="entry name" value="ABC_TRANSPORTER_1"/>
    <property type="match status" value="1"/>
</dbReference>
<dbReference type="PROSITE" id="PS50893">
    <property type="entry name" value="ABC_TRANSPORTER_2"/>
    <property type="match status" value="1"/>
</dbReference>
<dbReference type="PROSITE" id="PS51241">
    <property type="entry name" value="MODC"/>
    <property type="match status" value="1"/>
</dbReference>
<dbReference type="PROSITE" id="PS51866">
    <property type="entry name" value="MOP"/>
    <property type="match status" value="1"/>
</dbReference>
<organism>
    <name type="scientific">Escherichia coli O6:K15:H31 (strain 536 / UPEC)</name>
    <dbReference type="NCBI Taxonomy" id="362663"/>
    <lineage>
        <taxon>Bacteria</taxon>
        <taxon>Pseudomonadati</taxon>
        <taxon>Pseudomonadota</taxon>
        <taxon>Gammaproteobacteria</taxon>
        <taxon>Enterobacterales</taxon>
        <taxon>Enterobacteriaceae</taxon>
        <taxon>Escherichia</taxon>
    </lineage>
</organism>
<name>MODC_ECOL5</name>
<reference key="1">
    <citation type="journal article" date="2006" name="Mol. Microbiol.">
        <title>Role of pathogenicity island-associated integrases in the genome plasticity of uropathogenic Escherichia coli strain 536.</title>
        <authorList>
            <person name="Hochhut B."/>
            <person name="Wilde C."/>
            <person name="Balling G."/>
            <person name="Middendorf B."/>
            <person name="Dobrindt U."/>
            <person name="Brzuszkiewicz E."/>
            <person name="Gottschalk G."/>
            <person name="Carniel E."/>
            <person name="Hacker J."/>
        </authorList>
    </citation>
    <scope>NUCLEOTIDE SEQUENCE [LARGE SCALE GENOMIC DNA]</scope>
    <source>
        <strain>536 / UPEC</strain>
    </source>
</reference>
<proteinExistence type="inferred from homology"/>
<keyword id="KW-0067">ATP-binding</keyword>
<keyword id="KW-0997">Cell inner membrane</keyword>
<keyword id="KW-1003">Cell membrane</keyword>
<keyword id="KW-0472">Membrane</keyword>
<keyword id="KW-0500">Molybdenum</keyword>
<keyword id="KW-0547">Nucleotide-binding</keyword>
<keyword id="KW-1278">Translocase</keyword>
<keyword id="KW-0813">Transport</keyword>
<accession>Q0TJT5</accession>
<protein>
    <recommendedName>
        <fullName evidence="1">Molybdenum import ATP-binding protein ModC</fullName>
        <ecNumber evidence="1">7.3.2.5</ecNumber>
    </recommendedName>
</protein>
<evidence type="ECO:0000255" key="1">
    <source>
        <dbReference type="HAMAP-Rule" id="MF_01705"/>
    </source>
</evidence>
<evidence type="ECO:0000255" key="2">
    <source>
        <dbReference type="PROSITE-ProRule" id="PRU01213"/>
    </source>
</evidence>
<comment type="function">
    <text evidence="1">Part of the ABC transporter complex ModABC involved in molybdenum import. Responsible for energy coupling to the transport system.</text>
</comment>
<comment type="catalytic activity">
    <reaction evidence="1">
        <text>molybdate(out) + ATP + H2O = molybdate(in) + ADP + phosphate + H(+)</text>
        <dbReference type="Rhea" id="RHEA:22020"/>
        <dbReference type="ChEBI" id="CHEBI:15377"/>
        <dbReference type="ChEBI" id="CHEBI:15378"/>
        <dbReference type="ChEBI" id="CHEBI:30616"/>
        <dbReference type="ChEBI" id="CHEBI:36264"/>
        <dbReference type="ChEBI" id="CHEBI:43474"/>
        <dbReference type="ChEBI" id="CHEBI:456216"/>
        <dbReference type="EC" id="7.3.2.5"/>
    </reaction>
</comment>
<comment type="subunit">
    <text evidence="1">The complex is composed of two ATP-binding proteins (ModC), two transmembrane proteins (ModB) and a solute-binding protein (ModA).</text>
</comment>
<comment type="subcellular location">
    <subcellularLocation>
        <location evidence="1">Cell inner membrane</location>
        <topology evidence="1">Peripheral membrane protein</topology>
    </subcellularLocation>
</comment>
<comment type="similarity">
    <text evidence="1">Belongs to the ABC transporter superfamily. Molybdate importer (TC 3.A.1.8) family.</text>
</comment>
<sequence length="352" mass="39071">MLELNFSQTLGNHCLTINETLPANGITAIFGVSGAGKTSLINAISGLTRPQKGRIVLNGRVLNDAEKGICLSPEKRRVGYVFQDARLFPHYKVRGNLRYGMAKSMVNQFDKLVALLGIEPLLDRLPGSLSGGEKQRVAIGRALLTAPELLLLDEPLASLDIPRKRELLPYLQRLTREINIPMLYVSHSLDEILHLADRVMVLENGQVKAFGALEEVWGSSVMNPWLPKEQQSSILKVTVLEHHPHYAMTALALGDQHLWVNKLDEPLQAALRIRIQASDVSLVLQPPQQTSIRNVLRAKVVNSYDDNGQVEVELEVGGKTLWARISPWARDELAIKPGLWLYAQIKSVSITA</sequence>
<feature type="chain" id="PRO_0000271672" description="Molybdenum import ATP-binding protein ModC">
    <location>
        <begin position="1"/>
        <end position="352"/>
    </location>
</feature>
<feature type="domain" description="ABC transporter" evidence="1">
    <location>
        <begin position="1"/>
        <end position="229"/>
    </location>
</feature>
<feature type="domain" description="Mop" evidence="2">
    <location>
        <begin position="289"/>
        <end position="352"/>
    </location>
</feature>
<feature type="binding site" evidence="1">
    <location>
        <begin position="31"/>
        <end position="38"/>
    </location>
    <ligand>
        <name>ATP</name>
        <dbReference type="ChEBI" id="CHEBI:30616"/>
    </ligand>
</feature>
<gene>
    <name evidence="1" type="primary">modC</name>
    <name type="ordered locus">ECP_0777</name>
</gene>